<name>RAS1_DROWI</name>
<gene>
    <name evidence="2" type="primary">Ras85D</name>
    <name type="ORF">GK13838</name>
</gene>
<protein>
    <recommendedName>
        <fullName evidence="2">Ras-like protein 1</fullName>
        <ecNumber evidence="1">3.6.5.2</ecNumber>
    </recommendedName>
</protein>
<accession>B4NJ72</accession>
<reference evidence="4" key="1">
    <citation type="journal article" date="2007" name="Nature">
        <title>Evolution of genes and genomes on the Drosophila phylogeny.</title>
        <authorList>
            <consortium name="Drosophila 12 genomes consortium"/>
        </authorList>
    </citation>
    <scope>NUCLEOTIDE SEQUENCE [LARGE SCALE GENOMIC DNA]</scope>
    <source>
        <strain evidence="4">Tucson 14030-0811.24</strain>
    </source>
</reference>
<dbReference type="EC" id="3.6.5.2" evidence="1"/>
<dbReference type="EMBL" id="CH964272">
    <property type="protein sequence ID" value="EDW83865.1"/>
    <property type="molecule type" value="Genomic_DNA"/>
</dbReference>
<dbReference type="SMR" id="B4NJ72"/>
<dbReference type="STRING" id="7260.B4NJ72"/>
<dbReference type="EnsemblMetazoa" id="FBtr0244489">
    <property type="protein sequence ID" value="FBpp0242981"/>
    <property type="gene ID" value="FBgn0215846"/>
</dbReference>
<dbReference type="EnsemblMetazoa" id="XM_002072843.4">
    <property type="protein sequence ID" value="XP_002072879.1"/>
    <property type="gene ID" value="LOC6650000"/>
</dbReference>
<dbReference type="EnsemblMetazoa" id="XM_023180102.2">
    <property type="protein sequence ID" value="XP_023035870.1"/>
    <property type="gene ID" value="LOC6650000"/>
</dbReference>
<dbReference type="GeneID" id="6650000"/>
<dbReference type="KEGG" id="dwi:6650000"/>
<dbReference type="CTD" id="41140"/>
<dbReference type="eggNOG" id="KOG0395">
    <property type="taxonomic scope" value="Eukaryota"/>
</dbReference>
<dbReference type="HOGENOM" id="CLU_041217_9_8_1"/>
<dbReference type="OMA" id="CCGGCVI"/>
<dbReference type="OrthoDB" id="5976022at2759"/>
<dbReference type="PhylomeDB" id="B4NJ72"/>
<dbReference type="ChiTaRS" id="Ras85D">
    <property type="organism name" value="fly"/>
</dbReference>
<dbReference type="Proteomes" id="UP000007798">
    <property type="component" value="Unassembled WGS sequence"/>
</dbReference>
<dbReference type="GO" id="GO:0016020">
    <property type="term" value="C:membrane"/>
    <property type="evidence" value="ECO:0000250"/>
    <property type="project" value="UniProtKB"/>
</dbReference>
<dbReference type="GO" id="GO:0005886">
    <property type="term" value="C:plasma membrane"/>
    <property type="evidence" value="ECO:0007669"/>
    <property type="project" value="UniProtKB-SubCell"/>
</dbReference>
<dbReference type="GO" id="GO:0003925">
    <property type="term" value="F:G protein activity"/>
    <property type="evidence" value="ECO:0007669"/>
    <property type="project" value="UniProtKB-EC"/>
</dbReference>
<dbReference type="GO" id="GO:0005525">
    <property type="term" value="F:GTP binding"/>
    <property type="evidence" value="ECO:0007669"/>
    <property type="project" value="UniProtKB-KW"/>
</dbReference>
<dbReference type="GO" id="GO:0007165">
    <property type="term" value="P:signal transduction"/>
    <property type="evidence" value="ECO:0007669"/>
    <property type="project" value="InterPro"/>
</dbReference>
<dbReference type="CDD" id="cd04138">
    <property type="entry name" value="H_N_K_Ras_like"/>
    <property type="match status" value="1"/>
</dbReference>
<dbReference type="FunFam" id="3.40.50.300:FF:000096">
    <property type="entry name" value="KRAS proto-oncogene, GTPase"/>
    <property type="match status" value="1"/>
</dbReference>
<dbReference type="Gene3D" id="3.40.50.300">
    <property type="entry name" value="P-loop containing nucleotide triphosphate hydrolases"/>
    <property type="match status" value="1"/>
</dbReference>
<dbReference type="InterPro" id="IPR027417">
    <property type="entry name" value="P-loop_NTPase"/>
</dbReference>
<dbReference type="InterPro" id="IPR005225">
    <property type="entry name" value="Small_GTP-bd"/>
</dbReference>
<dbReference type="InterPro" id="IPR001806">
    <property type="entry name" value="Small_GTPase"/>
</dbReference>
<dbReference type="InterPro" id="IPR020849">
    <property type="entry name" value="Small_GTPase_Ras-type"/>
</dbReference>
<dbReference type="NCBIfam" id="TIGR00231">
    <property type="entry name" value="small_GTP"/>
    <property type="match status" value="1"/>
</dbReference>
<dbReference type="PANTHER" id="PTHR24070">
    <property type="entry name" value="RAS, DI-RAS, AND RHEB FAMILY MEMBERS OF SMALL GTPASE SUPERFAMILY"/>
    <property type="match status" value="1"/>
</dbReference>
<dbReference type="Pfam" id="PF00071">
    <property type="entry name" value="Ras"/>
    <property type="match status" value="1"/>
</dbReference>
<dbReference type="PRINTS" id="PR00449">
    <property type="entry name" value="RASTRNSFRMNG"/>
</dbReference>
<dbReference type="SMART" id="SM00175">
    <property type="entry name" value="RAB"/>
    <property type="match status" value="1"/>
</dbReference>
<dbReference type="SMART" id="SM00176">
    <property type="entry name" value="RAN"/>
    <property type="match status" value="1"/>
</dbReference>
<dbReference type="SMART" id="SM00173">
    <property type="entry name" value="RAS"/>
    <property type="match status" value="1"/>
</dbReference>
<dbReference type="SMART" id="SM00174">
    <property type="entry name" value="RHO"/>
    <property type="match status" value="1"/>
</dbReference>
<dbReference type="SUPFAM" id="SSF52540">
    <property type="entry name" value="P-loop containing nucleoside triphosphate hydrolases"/>
    <property type="match status" value="1"/>
</dbReference>
<dbReference type="PROSITE" id="PS51421">
    <property type="entry name" value="RAS"/>
    <property type="match status" value="1"/>
</dbReference>
<keyword id="KW-1003">Cell membrane</keyword>
<keyword id="KW-0342">GTP-binding</keyword>
<keyword id="KW-0378">Hydrolase</keyword>
<keyword id="KW-0449">Lipoprotein</keyword>
<keyword id="KW-0472">Membrane</keyword>
<keyword id="KW-0488">Methylation</keyword>
<keyword id="KW-0547">Nucleotide-binding</keyword>
<keyword id="KW-0636">Prenylation</keyword>
<keyword id="KW-1185">Reference proteome</keyword>
<sequence length="189" mass="21588">MTEYKLVVVGAGGVGKSALTIQLIQNHFVDEYDPTIEDSYRKQVVIDGETCLLDILDTAGQEEYSAMRDQYMRTGEGFLLVFAVNSAKSFEDIGTYREQIKRVKDAEEVPMVLVGNKCDLPSWNVQNEQAREVAKQYGIPYIETSAKTRMGVDDAFYTLVREIRKDKDNKGRKGRKLNKPNRRFKCKML</sequence>
<evidence type="ECO:0000250" key="1">
    <source>
        <dbReference type="UniProtKB" id="P01112"/>
    </source>
</evidence>
<evidence type="ECO:0000250" key="2">
    <source>
        <dbReference type="UniProtKB" id="P08646"/>
    </source>
</evidence>
<evidence type="ECO:0000255" key="3"/>
<evidence type="ECO:0000312" key="4">
    <source>
        <dbReference type="EMBL" id="EDW83865.1"/>
    </source>
</evidence>
<comment type="function">
    <text evidence="1 2">Ras proteins bind GDP/GTP and possess intrinsic GTPase activity. Plays a role in eye development by regulating cell growth, survival of postmitotic ommatidial cells and differentiation of photoreceptor cells. During larval development, mediates Ptth/tor signaling leading to the production of ecdysone, a hormone required for the initiation of metamorphosis.</text>
</comment>
<comment type="catalytic activity">
    <reaction evidence="1">
        <text>GTP + H2O = GDP + phosphate + H(+)</text>
        <dbReference type="Rhea" id="RHEA:19669"/>
        <dbReference type="ChEBI" id="CHEBI:15377"/>
        <dbReference type="ChEBI" id="CHEBI:15378"/>
        <dbReference type="ChEBI" id="CHEBI:37565"/>
        <dbReference type="ChEBI" id="CHEBI:43474"/>
        <dbReference type="ChEBI" id="CHEBI:58189"/>
        <dbReference type="EC" id="3.6.5.2"/>
    </reaction>
</comment>
<comment type="activity regulation">
    <text>Alternates between an inactive form bound to GDP and an active form bound to GTP. Activated by a guanine nucleotide-exchange factor (GEF) and inactivated by a GTPase-activating protein (GAP).</text>
</comment>
<comment type="subcellular location">
    <subcellularLocation>
        <location evidence="2">Cell membrane</location>
        <topology evidence="2">Lipid-anchor</topology>
        <orientation evidence="2">Cytoplasmic side</orientation>
    </subcellularLocation>
</comment>
<comment type="similarity">
    <text evidence="3">Belongs to the small GTPase superfamily. Ras family.</text>
</comment>
<feature type="chain" id="PRO_0000363720" description="Ras-like protein 1" evidence="2">
    <location>
        <begin position="1"/>
        <end position="186"/>
    </location>
</feature>
<feature type="propeptide" id="PRO_0000363721" description="Removed in mature form" evidence="2">
    <location>
        <begin position="187"/>
        <end position="189"/>
    </location>
</feature>
<feature type="short sequence motif" description="Effector region">
    <location>
        <begin position="32"/>
        <end position="40"/>
    </location>
</feature>
<feature type="binding site" evidence="1">
    <location>
        <begin position="10"/>
        <end position="17"/>
    </location>
    <ligand>
        <name>GTP</name>
        <dbReference type="ChEBI" id="CHEBI:37565"/>
    </ligand>
</feature>
<feature type="binding site" evidence="1">
    <location>
        <begin position="57"/>
        <end position="61"/>
    </location>
    <ligand>
        <name>GTP</name>
        <dbReference type="ChEBI" id="CHEBI:37565"/>
    </ligand>
</feature>
<feature type="binding site" evidence="1">
    <location>
        <begin position="116"/>
        <end position="119"/>
    </location>
    <ligand>
        <name>GTP</name>
        <dbReference type="ChEBI" id="CHEBI:37565"/>
    </ligand>
</feature>
<feature type="modified residue" description="Cysteine methyl ester" evidence="2">
    <location>
        <position position="186"/>
    </location>
</feature>
<feature type="lipid moiety-binding region" description="S-geranylgeranyl cysteine" evidence="2">
    <location>
        <position position="186"/>
    </location>
</feature>
<proteinExistence type="inferred from homology"/>
<organism>
    <name type="scientific">Drosophila willistoni</name>
    <name type="common">Fruit fly</name>
    <dbReference type="NCBI Taxonomy" id="7260"/>
    <lineage>
        <taxon>Eukaryota</taxon>
        <taxon>Metazoa</taxon>
        <taxon>Ecdysozoa</taxon>
        <taxon>Arthropoda</taxon>
        <taxon>Hexapoda</taxon>
        <taxon>Insecta</taxon>
        <taxon>Pterygota</taxon>
        <taxon>Neoptera</taxon>
        <taxon>Endopterygota</taxon>
        <taxon>Diptera</taxon>
        <taxon>Brachycera</taxon>
        <taxon>Muscomorpha</taxon>
        <taxon>Ephydroidea</taxon>
        <taxon>Drosophilidae</taxon>
        <taxon>Drosophila</taxon>
        <taxon>Sophophora</taxon>
    </lineage>
</organism>